<feature type="chain" id="PRO_0000457671" description="RNA polymerase II subunit A C-terminal domain phosphatase SSU72 like protein 1">
    <location>
        <begin position="1"/>
        <end position="194"/>
    </location>
</feature>
<dbReference type="EC" id="3.1.3.16" evidence="1"/>
<dbReference type="EMBL" id="AC018793">
    <property type="status" value="NOT_ANNOTATED_CDS"/>
    <property type="molecule type" value="Genomic_DNA"/>
</dbReference>
<dbReference type="RefSeq" id="NP_001400927.1">
    <property type="nucleotide sequence ID" value="NM_001413998.1"/>
</dbReference>
<dbReference type="SMR" id="A0A1W2PQ27"/>
<dbReference type="FunCoup" id="A0A1W2PQ27">
    <property type="interactions" value="258"/>
</dbReference>
<dbReference type="STRING" id="9606.ENSP00000491894"/>
<dbReference type="BioMuta" id="ENSG00000284438"/>
<dbReference type="MassIVE" id="A0A1W2PQ27"/>
<dbReference type="PeptideAtlas" id="A0A1W2PQ27"/>
<dbReference type="Ensembl" id="ENST00000524542.3">
    <property type="protein sequence ID" value="ENSP00000491894.1"/>
    <property type="gene ID" value="ENSG00000284438.2"/>
</dbReference>
<dbReference type="GeneID" id="390033"/>
<dbReference type="MANE-Select" id="ENST00000524542.3">
    <property type="protein sequence ID" value="ENSP00000491894.1"/>
    <property type="RefSeq nucleotide sequence ID" value="NM_001413998.1"/>
    <property type="RefSeq protein sequence ID" value="NP_001400927.1"/>
</dbReference>
<dbReference type="AGR" id="HGNC:43626"/>
<dbReference type="GeneCards" id="SSU72L1"/>
<dbReference type="HGNC" id="HGNC:43626">
    <property type="gene designation" value="SSU72L1"/>
</dbReference>
<dbReference type="VEuPathDB" id="HostDB:ENSG00000284438"/>
<dbReference type="GeneTree" id="ENSGT00390000010165"/>
<dbReference type="InParanoid" id="A0A1W2PQ27"/>
<dbReference type="OrthoDB" id="9552019at2759"/>
<dbReference type="PAN-GO" id="A0A1W2PQ27">
    <property type="GO annotations" value="5 GO annotations based on evolutionary models"/>
</dbReference>
<dbReference type="PRO" id="PR:A0A1W2PQ27"/>
<dbReference type="Proteomes" id="UP000005640">
    <property type="component" value="Chromosome 11"/>
</dbReference>
<dbReference type="RNAct" id="A0A1W2PQ27">
    <property type="molecule type" value="protein"/>
</dbReference>
<dbReference type="Bgee" id="ENSG00000284438">
    <property type="expression patterns" value="Expressed in primordial germ cell in gonad and 5 other cell types or tissues"/>
</dbReference>
<dbReference type="GO" id="GO:0005847">
    <property type="term" value="C:mRNA cleavage and polyadenylation specificity factor complex"/>
    <property type="evidence" value="ECO:0000318"/>
    <property type="project" value="GO_Central"/>
</dbReference>
<dbReference type="GO" id="GO:0008420">
    <property type="term" value="F:RNA polymerase II CTD heptapeptide repeat phosphatase activity"/>
    <property type="evidence" value="ECO:0000318"/>
    <property type="project" value="GO_Central"/>
</dbReference>
<dbReference type="GO" id="GO:0006397">
    <property type="term" value="P:mRNA processing"/>
    <property type="evidence" value="ECO:0007669"/>
    <property type="project" value="UniProtKB-KW"/>
</dbReference>
<dbReference type="GO" id="GO:0006369">
    <property type="term" value="P:termination of RNA polymerase II transcription"/>
    <property type="evidence" value="ECO:0000318"/>
    <property type="project" value="GO_Central"/>
</dbReference>
<dbReference type="FunFam" id="3.40.50.2300:FF:000039">
    <property type="entry name" value="RNA polymerase II subunit A C-terminal domain phosphatase"/>
    <property type="match status" value="1"/>
</dbReference>
<dbReference type="FunFam" id="3.40.50.2300:FF:000066">
    <property type="entry name" value="RNA polymerase II subunit A C-terminal domain phosphatase SSU72"/>
    <property type="match status" value="1"/>
</dbReference>
<dbReference type="Gene3D" id="3.40.50.2300">
    <property type="match status" value="2"/>
</dbReference>
<dbReference type="InterPro" id="IPR036196">
    <property type="entry name" value="Ptyr_pPase_sf"/>
</dbReference>
<dbReference type="InterPro" id="IPR006811">
    <property type="entry name" value="RNA_pol_II_suA"/>
</dbReference>
<dbReference type="PANTHER" id="PTHR20383">
    <property type="entry name" value="RNA POLYMERASE II SUBUNIT A C-TERMINAL DOMAIN PHOSPHATASE"/>
    <property type="match status" value="1"/>
</dbReference>
<dbReference type="Pfam" id="PF04722">
    <property type="entry name" value="Ssu72"/>
    <property type="match status" value="1"/>
</dbReference>
<dbReference type="SUPFAM" id="SSF52788">
    <property type="entry name" value="Phosphotyrosine protein phosphatases I"/>
    <property type="match status" value="1"/>
</dbReference>
<organism>
    <name type="scientific">Homo sapiens</name>
    <name type="common">Human</name>
    <dbReference type="NCBI Taxonomy" id="9606"/>
    <lineage>
        <taxon>Eukaryota</taxon>
        <taxon>Metazoa</taxon>
        <taxon>Chordata</taxon>
        <taxon>Craniata</taxon>
        <taxon>Vertebrata</taxon>
        <taxon>Euteleostomi</taxon>
        <taxon>Mammalia</taxon>
        <taxon>Eutheria</taxon>
        <taxon>Euarchontoglires</taxon>
        <taxon>Primates</taxon>
        <taxon>Haplorrhini</taxon>
        <taxon>Catarrhini</taxon>
        <taxon>Hominidae</taxon>
        <taxon>Homo</taxon>
    </lineage>
</organism>
<proteinExistence type="inferred from homology"/>
<sequence>MLSSTLRVAVVCVSNVNRSMEAHSILRRKGLSVRSFGTESHVRLPGPRPNRPVVYDFATTYKEMYNDLLRKDRERYTRNGILHILGRNERIKPGPERFQECTDFFDVIFTCEESVYDTVVEDLCSREQQTFQPVHVINMEIQDTLEDATLGAFLICEICQCLQQSDDMEDNLEELLLQMEEKAGKSFLHTVCFY</sequence>
<accession>A0A1W2PQ27</accession>
<evidence type="ECO:0000250" key="1">
    <source>
        <dbReference type="UniProtKB" id="Q9NP77"/>
    </source>
</evidence>
<evidence type="ECO:0000305" key="2"/>
<evidence type="ECO:0000312" key="3">
    <source>
        <dbReference type="HGNC" id="HGNC:43626"/>
    </source>
</evidence>
<reference key="1">
    <citation type="journal article" date="2006" name="Nature">
        <title>Human chromosome 11 DNA sequence and analysis including novel gene identification.</title>
        <authorList>
            <person name="Taylor T.D."/>
            <person name="Noguchi H."/>
            <person name="Totoki Y."/>
            <person name="Toyoda A."/>
            <person name="Kuroki Y."/>
            <person name="Dewar K."/>
            <person name="Lloyd C."/>
            <person name="Itoh T."/>
            <person name="Takeda T."/>
            <person name="Kim D.-W."/>
            <person name="She X."/>
            <person name="Barlow K.F."/>
            <person name="Bloom T."/>
            <person name="Bruford E."/>
            <person name="Chang J.L."/>
            <person name="Cuomo C.A."/>
            <person name="Eichler E."/>
            <person name="FitzGerald M.G."/>
            <person name="Jaffe D.B."/>
            <person name="LaButti K."/>
            <person name="Nicol R."/>
            <person name="Park H.-S."/>
            <person name="Seaman C."/>
            <person name="Sougnez C."/>
            <person name="Yang X."/>
            <person name="Zimmer A.R."/>
            <person name="Zody M.C."/>
            <person name="Birren B.W."/>
            <person name="Nusbaum C."/>
            <person name="Fujiyama A."/>
            <person name="Hattori M."/>
            <person name="Rogers J."/>
            <person name="Lander E.S."/>
            <person name="Sakaki Y."/>
        </authorList>
    </citation>
    <scope>NUCLEOTIDE SEQUENCE [LARGE SCALE GENOMIC DNA]</scope>
</reference>
<name>S72L1_HUMAN</name>
<comment type="function">
    <text evidence="1">Protein phosphatase that catalyzes the dephosphorylation of the C-terminal domain of RNA polymerase II. Plays a role in RNA processing and termination.</text>
</comment>
<comment type="catalytic activity">
    <reaction evidence="1">
        <text>O-phospho-L-seryl-[protein] + H2O = L-seryl-[protein] + phosphate</text>
        <dbReference type="Rhea" id="RHEA:20629"/>
        <dbReference type="Rhea" id="RHEA-COMP:9863"/>
        <dbReference type="Rhea" id="RHEA-COMP:11604"/>
        <dbReference type="ChEBI" id="CHEBI:15377"/>
        <dbReference type="ChEBI" id="CHEBI:29999"/>
        <dbReference type="ChEBI" id="CHEBI:43474"/>
        <dbReference type="ChEBI" id="CHEBI:83421"/>
        <dbReference type="EC" id="3.1.3.16"/>
    </reaction>
</comment>
<comment type="catalytic activity">
    <reaction evidence="1">
        <text>O-phospho-L-threonyl-[protein] + H2O = L-threonyl-[protein] + phosphate</text>
        <dbReference type="Rhea" id="RHEA:47004"/>
        <dbReference type="Rhea" id="RHEA-COMP:11060"/>
        <dbReference type="Rhea" id="RHEA-COMP:11605"/>
        <dbReference type="ChEBI" id="CHEBI:15377"/>
        <dbReference type="ChEBI" id="CHEBI:30013"/>
        <dbReference type="ChEBI" id="CHEBI:43474"/>
        <dbReference type="ChEBI" id="CHEBI:61977"/>
        <dbReference type="EC" id="3.1.3.16"/>
    </reaction>
</comment>
<comment type="subcellular location">
    <subcellularLocation>
        <location evidence="1">Nucleus</location>
    </subcellularLocation>
</comment>
<comment type="similarity">
    <text evidence="2">Belongs to the SSU72 phosphatase family.</text>
</comment>
<gene>
    <name evidence="3" type="primary">SSU72L1</name>
</gene>
<keyword id="KW-0378">Hydrolase</keyword>
<keyword id="KW-0507">mRNA processing</keyword>
<keyword id="KW-0539">Nucleus</keyword>
<keyword id="KW-0904">Protein phosphatase</keyword>
<keyword id="KW-1185">Reference proteome</keyword>
<protein>
    <recommendedName>
        <fullName evidence="2">RNA polymerase II subunit A C-terminal domain phosphatase SSU72 like protein 1</fullName>
    </recommendedName>
    <alternativeName>
        <fullName evidence="2">RNA polymerase II subunit A C-terminal domain phosphatase SSU72L1</fullName>
        <shortName>CTD phosphatase SSU72L1</shortName>
        <ecNumber evidence="1">3.1.3.16</ecNumber>
    </alternativeName>
</protein>